<sequence length="686" mass="78099">MSNQHRQILVTCALPYANGPIHLGHMLEHIQADIWVRFQRMRGNEIHFVCADDAHGTPIMLKADQMGITPEQLIADVKEKHYADFCGFNISFDNYHSTHSEENRELSELIYSRLKENGFIKSRTISQLFDPEKSMFLPDRFVKGTCPKCKAEDQYGDNCEVCSATYSPTELINPRSAVSGATPVIKESEHFFFDLPSFESMLKEWNRSGALQSEVANKMQEWFDAGLQQWDISRDAPYFGFKIPGTENKYFYVWLDAPIGYMASFKNLCKRENLDFDRFWNKDSNTELYHFIGKDIMYFHSLFWPAMLDGANYRKPTNIFVHGYVTVNGEKMSKSRGTFIQAATYLKHLDPECLRYYYAAKLSNRIDDLDLNLDDFVQRVNTDLVNKLVNLASRNAGFIQKRFDGKLADKLEDESLFAEFIAQSEQIAAYYENREFGKAIREIMALTDKANKYVDDKAPWVIAKEEGREAELQAVCSMGIQLFRVLMGYLKPVLPKLAERSEAFLQAELTWDNLAQPLLNHGIAPFKALFSRLDVKQIDAMIEASKAENAAVNATVKKEEKNSKKSTALLTDFEPIEPEISIDDFAKIDLRVAKVIKCEEVPESKKLLKFQLDLGFEQRQVLSGIKGAYNNPEELEGRFVIVVANLAPRKMKFGVSEGMILSAGTGGEDLYLLDVDAGVKAGSRVM</sequence>
<accession>Q65S22</accession>
<comment type="function">
    <text evidence="1">Is required not only for elongation of protein synthesis but also for the initiation of all mRNA translation through initiator tRNA(fMet) aminoacylation.</text>
</comment>
<comment type="catalytic activity">
    <reaction evidence="1">
        <text>tRNA(Met) + L-methionine + ATP = L-methionyl-tRNA(Met) + AMP + diphosphate</text>
        <dbReference type="Rhea" id="RHEA:13481"/>
        <dbReference type="Rhea" id="RHEA-COMP:9667"/>
        <dbReference type="Rhea" id="RHEA-COMP:9698"/>
        <dbReference type="ChEBI" id="CHEBI:30616"/>
        <dbReference type="ChEBI" id="CHEBI:33019"/>
        <dbReference type="ChEBI" id="CHEBI:57844"/>
        <dbReference type="ChEBI" id="CHEBI:78442"/>
        <dbReference type="ChEBI" id="CHEBI:78530"/>
        <dbReference type="ChEBI" id="CHEBI:456215"/>
        <dbReference type="EC" id="6.1.1.10"/>
    </reaction>
</comment>
<comment type="cofactor">
    <cofactor evidence="1">
        <name>Zn(2+)</name>
        <dbReference type="ChEBI" id="CHEBI:29105"/>
    </cofactor>
    <text evidence="1">Binds 1 zinc ion per subunit.</text>
</comment>
<comment type="subunit">
    <text evidence="1">Homodimer.</text>
</comment>
<comment type="subcellular location">
    <subcellularLocation>
        <location evidence="1">Cytoplasm</location>
    </subcellularLocation>
</comment>
<comment type="similarity">
    <text evidence="1">Belongs to the class-I aminoacyl-tRNA synthetase family. MetG type 1 subfamily.</text>
</comment>
<name>SYM_MANSM</name>
<keyword id="KW-0030">Aminoacyl-tRNA synthetase</keyword>
<keyword id="KW-0067">ATP-binding</keyword>
<keyword id="KW-0963">Cytoplasm</keyword>
<keyword id="KW-0436">Ligase</keyword>
<keyword id="KW-0479">Metal-binding</keyword>
<keyword id="KW-0547">Nucleotide-binding</keyword>
<keyword id="KW-0648">Protein biosynthesis</keyword>
<keyword id="KW-0694">RNA-binding</keyword>
<keyword id="KW-0820">tRNA-binding</keyword>
<keyword id="KW-0862">Zinc</keyword>
<reference key="1">
    <citation type="journal article" date="2004" name="Nat. Biotechnol.">
        <title>The genome sequence of the capnophilic rumen bacterium Mannheimia succiniciproducens.</title>
        <authorList>
            <person name="Hong S.H."/>
            <person name="Kim J.S."/>
            <person name="Lee S.Y."/>
            <person name="In Y.H."/>
            <person name="Choi S.S."/>
            <person name="Rih J.-K."/>
            <person name="Kim C.H."/>
            <person name="Jeong H."/>
            <person name="Hur C.G."/>
            <person name="Kim J.J."/>
        </authorList>
    </citation>
    <scope>NUCLEOTIDE SEQUENCE [LARGE SCALE GENOMIC DNA]</scope>
    <source>
        <strain>KCTC 0769BP / MBEL55E</strain>
    </source>
</reference>
<gene>
    <name evidence="1" type="primary">metG</name>
    <name type="ordered locus">MS1631</name>
</gene>
<organism>
    <name type="scientific">Mannheimia succiniciproducens (strain KCTC 0769BP / MBEL55E)</name>
    <dbReference type="NCBI Taxonomy" id="221988"/>
    <lineage>
        <taxon>Bacteria</taxon>
        <taxon>Pseudomonadati</taxon>
        <taxon>Pseudomonadota</taxon>
        <taxon>Gammaproteobacteria</taxon>
        <taxon>Pasteurellales</taxon>
        <taxon>Pasteurellaceae</taxon>
        <taxon>Basfia</taxon>
    </lineage>
</organism>
<protein>
    <recommendedName>
        <fullName evidence="1">Methionine--tRNA ligase</fullName>
        <ecNumber evidence="1">6.1.1.10</ecNumber>
    </recommendedName>
    <alternativeName>
        <fullName evidence="1">Methionyl-tRNA synthetase</fullName>
        <shortName evidence="1">MetRS</shortName>
    </alternativeName>
</protein>
<feature type="chain" id="PRO_0000139142" description="Methionine--tRNA ligase">
    <location>
        <begin position="1"/>
        <end position="686"/>
    </location>
</feature>
<feature type="domain" description="tRNA-binding" evidence="1">
    <location>
        <begin position="584"/>
        <end position="686"/>
    </location>
</feature>
<feature type="short sequence motif" description="'HIGH' region">
    <location>
        <begin position="15"/>
        <end position="25"/>
    </location>
</feature>
<feature type="short sequence motif" description="'KMSKS' region">
    <location>
        <begin position="331"/>
        <end position="335"/>
    </location>
</feature>
<feature type="binding site" evidence="1">
    <location>
        <position position="146"/>
    </location>
    <ligand>
        <name>Zn(2+)</name>
        <dbReference type="ChEBI" id="CHEBI:29105"/>
    </ligand>
</feature>
<feature type="binding site" evidence="1">
    <location>
        <position position="149"/>
    </location>
    <ligand>
        <name>Zn(2+)</name>
        <dbReference type="ChEBI" id="CHEBI:29105"/>
    </ligand>
</feature>
<feature type="binding site" evidence="1">
    <location>
        <position position="159"/>
    </location>
    <ligand>
        <name>Zn(2+)</name>
        <dbReference type="ChEBI" id="CHEBI:29105"/>
    </ligand>
</feature>
<feature type="binding site" evidence="1">
    <location>
        <position position="162"/>
    </location>
    <ligand>
        <name>Zn(2+)</name>
        <dbReference type="ChEBI" id="CHEBI:29105"/>
    </ligand>
</feature>
<feature type="binding site" evidence="1">
    <location>
        <position position="334"/>
    </location>
    <ligand>
        <name>ATP</name>
        <dbReference type="ChEBI" id="CHEBI:30616"/>
    </ligand>
</feature>
<proteinExistence type="inferred from homology"/>
<dbReference type="EC" id="6.1.1.10" evidence="1"/>
<dbReference type="EMBL" id="AE016827">
    <property type="protein sequence ID" value="AAU38238.1"/>
    <property type="molecule type" value="Genomic_DNA"/>
</dbReference>
<dbReference type="RefSeq" id="WP_011200799.1">
    <property type="nucleotide sequence ID" value="NC_006300.1"/>
</dbReference>
<dbReference type="SMR" id="Q65S22"/>
<dbReference type="STRING" id="221988.MS1631"/>
<dbReference type="KEGG" id="msu:MS1631"/>
<dbReference type="eggNOG" id="COG0073">
    <property type="taxonomic scope" value="Bacteria"/>
</dbReference>
<dbReference type="eggNOG" id="COG0143">
    <property type="taxonomic scope" value="Bacteria"/>
</dbReference>
<dbReference type="HOGENOM" id="CLU_009710_7_0_6"/>
<dbReference type="OrthoDB" id="9810191at2"/>
<dbReference type="Proteomes" id="UP000000607">
    <property type="component" value="Chromosome"/>
</dbReference>
<dbReference type="GO" id="GO:0005829">
    <property type="term" value="C:cytosol"/>
    <property type="evidence" value="ECO:0007669"/>
    <property type="project" value="TreeGrafter"/>
</dbReference>
<dbReference type="GO" id="GO:0005524">
    <property type="term" value="F:ATP binding"/>
    <property type="evidence" value="ECO:0007669"/>
    <property type="project" value="UniProtKB-UniRule"/>
</dbReference>
<dbReference type="GO" id="GO:0046872">
    <property type="term" value="F:metal ion binding"/>
    <property type="evidence" value="ECO:0007669"/>
    <property type="project" value="UniProtKB-KW"/>
</dbReference>
<dbReference type="GO" id="GO:0004825">
    <property type="term" value="F:methionine-tRNA ligase activity"/>
    <property type="evidence" value="ECO:0007669"/>
    <property type="project" value="UniProtKB-UniRule"/>
</dbReference>
<dbReference type="GO" id="GO:0000049">
    <property type="term" value="F:tRNA binding"/>
    <property type="evidence" value="ECO:0007669"/>
    <property type="project" value="UniProtKB-KW"/>
</dbReference>
<dbReference type="GO" id="GO:0006431">
    <property type="term" value="P:methionyl-tRNA aminoacylation"/>
    <property type="evidence" value="ECO:0007669"/>
    <property type="project" value="UniProtKB-UniRule"/>
</dbReference>
<dbReference type="CDD" id="cd07957">
    <property type="entry name" value="Anticodon_Ia_Met"/>
    <property type="match status" value="1"/>
</dbReference>
<dbReference type="CDD" id="cd00814">
    <property type="entry name" value="MetRS_core"/>
    <property type="match status" value="1"/>
</dbReference>
<dbReference type="CDD" id="cd02800">
    <property type="entry name" value="tRNA_bind_EcMetRS_like"/>
    <property type="match status" value="1"/>
</dbReference>
<dbReference type="FunFam" id="1.10.730.10:FF:000005">
    <property type="entry name" value="Methionine--tRNA ligase"/>
    <property type="match status" value="1"/>
</dbReference>
<dbReference type="FunFam" id="2.20.28.20:FF:000001">
    <property type="entry name" value="Methionine--tRNA ligase"/>
    <property type="match status" value="1"/>
</dbReference>
<dbReference type="FunFam" id="2.40.50.140:FF:000042">
    <property type="entry name" value="Methionine--tRNA ligase"/>
    <property type="match status" value="1"/>
</dbReference>
<dbReference type="Gene3D" id="3.40.50.620">
    <property type="entry name" value="HUPs"/>
    <property type="match status" value="1"/>
</dbReference>
<dbReference type="Gene3D" id="1.10.730.10">
    <property type="entry name" value="Isoleucyl-tRNA Synthetase, Domain 1"/>
    <property type="match status" value="1"/>
</dbReference>
<dbReference type="Gene3D" id="2.20.28.20">
    <property type="entry name" value="Methionyl-tRNA synthetase, Zn-domain"/>
    <property type="match status" value="1"/>
</dbReference>
<dbReference type="Gene3D" id="2.40.50.140">
    <property type="entry name" value="Nucleic acid-binding proteins"/>
    <property type="match status" value="1"/>
</dbReference>
<dbReference type="HAMAP" id="MF_00098">
    <property type="entry name" value="Met_tRNA_synth_type1"/>
    <property type="match status" value="1"/>
</dbReference>
<dbReference type="InterPro" id="IPR001412">
    <property type="entry name" value="aa-tRNA-synth_I_CS"/>
</dbReference>
<dbReference type="InterPro" id="IPR041872">
    <property type="entry name" value="Anticodon_Met"/>
</dbReference>
<dbReference type="InterPro" id="IPR004495">
    <property type="entry name" value="Met-tRNA-synth_bsu_C"/>
</dbReference>
<dbReference type="InterPro" id="IPR023458">
    <property type="entry name" value="Met-tRNA_ligase_1"/>
</dbReference>
<dbReference type="InterPro" id="IPR014758">
    <property type="entry name" value="Met-tRNA_synth"/>
</dbReference>
<dbReference type="InterPro" id="IPR015413">
    <property type="entry name" value="Methionyl/Leucyl_tRNA_Synth"/>
</dbReference>
<dbReference type="InterPro" id="IPR033911">
    <property type="entry name" value="MetRS_core"/>
</dbReference>
<dbReference type="InterPro" id="IPR029038">
    <property type="entry name" value="MetRS_Zn"/>
</dbReference>
<dbReference type="InterPro" id="IPR012340">
    <property type="entry name" value="NA-bd_OB-fold"/>
</dbReference>
<dbReference type="InterPro" id="IPR014729">
    <property type="entry name" value="Rossmann-like_a/b/a_fold"/>
</dbReference>
<dbReference type="InterPro" id="IPR002547">
    <property type="entry name" value="tRNA-bd_dom"/>
</dbReference>
<dbReference type="InterPro" id="IPR009080">
    <property type="entry name" value="tRNAsynth_Ia_anticodon-bd"/>
</dbReference>
<dbReference type="NCBIfam" id="TIGR00398">
    <property type="entry name" value="metG"/>
    <property type="match status" value="1"/>
</dbReference>
<dbReference type="NCBIfam" id="TIGR00399">
    <property type="entry name" value="metG_C_term"/>
    <property type="match status" value="1"/>
</dbReference>
<dbReference type="NCBIfam" id="NF001100">
    <property type="entry name" value="PRK00133.1"/>
    <property type="match status" value="1"/>
</dbReference>
<dbReference type="PANTHER" id="PTHR45765">
    <property type="entry name" value="METHIONINE--TRNA LIGASE"/>
    <property type="match status" value="1"/>
</dbReference>
<dbReference type="PANTHER" id="PTHR45765:SF1">
    <property type="entry name" value="METHIONINE--TRNA LIGASE, CYTOPLASMIC"/>
    <property type="match status" value="1"/>
</dbReference>
<dbReference type="Pfam" id="PF19303">
    <property type="entry name" value="Anticodon_3"/>
    <property type="match status" value="1"/>
</dbReference>
<dbReference type="Pfam" id="PF09334">
    <property type="entry name" value="tRNA-synt_1g"/>
    <property type="match status" value="1"/>
</dbReference>
<dbReference type="Pfam" id="PF01588">
    <property type="entry name" value="tRNA_bind"/>
    <property type="match status" value="1"/>
</dbReference>
<dbReference type="PRINTS" id="PR01041">
    <property type="entry name" value="TRNASYNTHMET"/>
</dbReference>
<dbReference type="SUPFAM" id="SSF47323">
    <property type="entry name" value="Anticodon-binding domain of a subclass of class I aminoacyl-tRNA synthetases"/>
    <property type="match status" value="1"/>
</dbReference>
<dbReference type="SUPFAM" id="SSF57770">
    <property type="entry name" value="Methionyl-tRNA synthetase (MetRS), Zn-domain"/>
    <property type="match status" value="1"/>
</dbReference>
<dbReference type="SUPFAM" id="SSF50249">
    <property type="entry name" value="Nucleic acid-binding proteins"/>
    <property type="match status" value="1"/>
</dbReference>
<dbReference type="SUPFAM" id="SSF52374">
    <property type="entry name" value="Nucleotidylyl transferase"/>
    <property type="match status" value="1"/>
</dbReference>
<dbReference type="PROSITE" id="PS00178">
    <property type="entry name" value="AA_TRNA_LIGASE_I"/>
    <property type="match status" value="1"/>
</dbReference>
<dbReference type="PROSITE" id="PS50886">
    <property type="entry name" value="TRBD"/>
    <property type="match status" value="1"/>
</dbReference>
<evidence type="ECO:0000255" key="1">
    <source>
        <dbReference type="HAMAP-Rule" id="MF_00098"/>
    </source>
</evidence>